<organism>
    <name type="scientific">Lodderomyces elongisporus (strain ATCC 11503 / CBS 2605 / JCM 1781 / NBRC 1676 / NRRL YB-4239)</name>
    <name type="common">Yeast</name>
    <name type="synonym">Saccharomyces elongisporus</name>
    <dbReference type="NCBI Taxonomy" id="379508"/>
    <lineage>
        <taxon>Eukaryota</taxon>
        <taxon>Fungi</taxon>
        <taxon>Dikarya</taxon>
        <taxon>Ascomycota</taxon>
        <taxon>Saccharomycotina</taxon>
        <taxon>Pichiomycetes</taxon>
        <taxon>Debaryomycetaceae</taxon>
        <taxon>Candida/Lodderomyces clade</taxon>
        <taxon>Lodderomyces</taxon>
    </lineage>
</organism>
<reference key="1">
    <citation type="journal article" date="2009" name="Nature">
        <title>Evolution of pathogenicity and sexual reproduction in eight Candida genomes.</title>
        <authorList>
            <person name="Butler G."/>
            <person name="Rasmussen M.D."/>
            <person name="Lin M.F."/>
            <person name="Santos M.A.S."/>
            <person name="Sakthikumar S."/>
            <person name="Munro C.A."/>
            <person name="Rheinbay E."/>
            <person name="Grabherr M."/>
            <person name="Forche A."/>
            <person name="Reedy J.L."/>
            <person name="Agrafioti I."/>
            <person name="Arnaud M.B."/>
            <person name="Bates S."/>
            <person name="Brown A.J.P."/>
            <person name="Brunke S."/>
            <person name="Costanzo M.C."/>
            <person name="Fitzpatrick D.A."/>
            <person name="de Groot P.W.J."/>
            <person name="Harris D."/>
            <person name="Hoyer L.L."/>
            <person name="Hube B."/>
            <person name="Klis F.M."/>
            <person name="Kodira C."/>
            <person name="Lennard N."/>
            <person name="Logue M.E."/>
            <person name="Martin R."/>
            <person name="Neiman A.M."/>
            <person name="Nikolaou E."/>
            <person name="Quail M.A."/>
            <person name="Quinn J."/>
            <person name="Santos M.C."/>
            <person name="Schmitzberger F.F."/>
            <person name="Sherlock G."/>
            <person name="Shah P."/>
            <person name="Silverstein K.A.T."/>
            <person name="Skrzypek M.S."/>
            <person name="Soll D."/>
            <person name="Staggs R."/>
            <person name="Stansfield I."/>
            <person name="Stumpf M.P.H."/>
            <person name="Sudbery P.E."/>
            <person name="Srikantha T."/>
            <person name="Zeng Q."/>
            <person name="Berman J."/>
            <person name="Berriman M."/>
            <person name="Heitman J."/>
            <person name="Gow N.A.R."/>
            <person name="Lorenz M.C."/>
            <person name="Birren B.W."/>
            <person name="Kellis M."/>
            <person name="Cuomo C.A."/>
        </authorList>
    </citation>
    <scope>NUCLEOTIDE SEQUENCE [LARGE SCALE GENOMIC DNA]</scope>
    <source>
        <strain>ATCC 11503 / BCRC 21390 / CBS 2605 / JCM 1781 / NBRC 1676 / NRRL YB-4239</strain>
    </source>
</reference>
<name>SEC23_LODEL</name>
<accession>A5E7S3</accession>
<comment type="function">
    <text evidence="1">Component of the coat protein complex II (COPII) which promotes the formation of transport vesicles from the endoplasmic reticulum (ER). The coat has two main functions, the physical deformation of the endoplasmic reticulum membrane into vesicles and the selection of cargo molecules (By similarity).</text>
</comment>
<comment type="subunit">
    <text evidence="1">The COPII coat is composed of at least 5 proteins: the SEC23/24 complex, the SEC13/31 complex, and the protein SAR1.</text>
</comment>
<comment type="subcellular location">
    <subcellularLocation>
        <location evidence="1">Cytoplasm</location>
    </subcellularLocation>
    <subcellularLocation>
        <location evidence="1">Cytoplasmic vesicle</location>
        <location evidence="1">COPII-coated vesicle membrane</location>
        <topology evidence="1">Peripheral membrane protein</topology>
        <orientation evidence="1">Cytoplasmic side</orientation>
    </subcellularLocation>
    <subcellularLocation>
        <location evidence="1">Endoplasmic reticulum membrane</location>
        <topology evidence="1">Peripheral membrane protein</topology>
        <orientation evidence="1">Cytoplasmic side</orientation>
    </subcellularLocation>
    <subcellularLocation>
        <location evidence="1">Golgi apparatus membrane</location>
        <topology evidence="1">Peripheral membrane protein</topology>
        <orientation evidence="1">Cytoplasmic side</orientation>
    </subcellularLocation>
</comment>
<comment type="similarity">
    <text evidence="2">Belongs to the SEC23/SEC24 family. SEC23 subfamily.</text>
</comment>
<protein>
    <recommendedName>
        <fullName>Protein transport protein SEC23</fullName>
    </recommendedName>
</protein>
<sequence>MNFEEAEDINGVRFAWNAFPSTKAEAGKIVVPTGALYTPLKQREDLPIAAYDPVYCSNQSCKSILNPYCAVDPNGFWRCPLCQGRNSLPAHYHGINAENLPLELQNTSSTVEYITARPVQNPPIFTFVIDLCQDEENLKALIEDVIVSFNYLPPNALVGLITYGTMVQVHDLGSEKINKSYIFRGDKEYTDKQISDMLNRPVAPVLNQQQQQQQQQQPLQQQQQLANSLTRFFLPLEDVEFQLTSLLEGLNRDPWAVANGARPLRSTGSALNVAISLLGLTFPGFGARVMLFAAGPGTLNPGLIVGNQLKEPIRSHSDIDKDNAKHFKKAAKFYDALAAKAVKNCHTVDIFAGCYDQIGLLEMKNLCNNTGGTMLLSDAFTTSIFKRSFLRLFNKDEEGYLLMGFNGTFEIRTSKELKVSGLIGNASSLGVKTSNVSENELGIGGSSHYRLCSTSPRHTYAVFFDVANTQQLPPTAQSYIQFITHYQHSSGTYRIRVTTVSNYLTSDEQSLTNSFDQEAAAVIMARVTIFKSEQDDGADVLRWVDRMLIRLCQKFADYRKDQEESFRLGPQFQLYPQFIYYLRRSQFLQVFNNSPDETAFYRHVLLTEDANNSLIMIQPTLTSFTLDGEPEAVLLDSVSIKDDRILLLDTFFHILIFHGKTISAWRKAKYQEQEEYANFKQLLDEPKQEAAELLADRYPLPRFIDTEEGGSQARFLYSKLNPSVTYNTNEMIGGPGMGGAGGAIVLTDDVSLQVFMSHLQKLVVSGSS</sequence>
<keyword id="KW-0963">Cytoplasm</keyword>
<keyword id="KW-0968">Cytoplasmic vesicle</keyword>
<keyword id="KW-0256">Endoplasmic reticulum</keyword>
<keyword id="KW-0931">ER-Golgi transport</keyword>
<keyword id="KW-0333">Golgi apparatus</keyword>
<keyword id="KW-0472">Membrane</keyword>
<keyword id="KW-0479">Metal-binding</keyword>
<keyword id="KW-0653">Protein transport</keyword>
<keyword id="KW-1185">Reference proteome</keyword>
<keyword id="KW-0813">Transport</keyword>
<keyword id="KW-0862">Zinc</keyword>
<evidence type="ECO:0000250" key="1"/>
<evidence type="ECO:0000305" key="2"/>
<dbReference type="EMBL" id="CH981534">
    <property type="protein sequence ID" value="EDK47481.1"/>
    <property type="molecule type" value="Genomic_DNA"/>
</dbReference>
<dbReference type="RefSeq" id="XP_001523116.1">
    <property type="nucleotide sequence ID" value="XM_001523066.1"/>
</dbReference>
<dbReference type="SMR" id="A5E7S3"/>
<dbReference type="FunCoup" id="A5E7S3">
    <property type="interactions" value="993"/>
</dbReference>
<dbReference type="STRING" id="379508.A5E7S3"/>
<dbReference type="GeneID" id="5230272"/>
<dbReference type="KEGG" id="lel:PVL30_004419"/>
<dbReference type="eggNOG" id="KOG1986">
    <property type="taxonomic scope" value="Eukaryota"/>
</dbReference>
<dbReference type="HOGENOM" id="CLU_008658_3_0_1"/>
<dbReference type="InParanoid" id="A5E7S3"/>
<dbReference type="OMA" id="FPPHYAE"/>
<dbReference type="OrthoDB" id="10256289at2759"/>
<dbReference type="Proteomes" id="UP000001996">
    <property type="component" value="Unassembled WGS sequence"/>
</dbReference>
<dbReference type="GO" id="GO:0030127">
    <property type="term" value="C:COPII vesicle coat"/>
    <property type="evidence" value="ECO:0007669"/>
    <property type="project" value="EnsemblFungi"/>
</dbReference>
<dbReference type="GO" id="GO:0070971">
    <property type="term" value="C:endoplasmic reticulum exit site"/>
    <property type="evidence" value="ECO:0007669"/>
    <property type="project" value="TreeGrafter"/>
</dbReference>
<dbReference type="GO" id="GO:0005789">
    <property type="term" value="C:endoplasmic reticulum membrane"/>
    <property type="evidence" value="ECO:0007669"/>
    <property type="project" value="UniProtKB-SubCell"/>
</dbReference>
<dbReference type="GO" id="GO:0000139">
    <property type="term" value="C:Golgi membrane"/>
    <property type="evidence" value="ECO:0007669"/>
    <property type="project" value="UniProtKB-SubCell"/>
</dbReference>
<dbReference type="GO" id="GO:0005096">
    <property type="term" value="F:GTPase activator activity"/>
    <property type="evidence" value="ECO:0007669"/>
    <property type="project" value="EnsemblFungi"/>
</dbReference>
<dbReference type="GO" id="GO:0008270">
    <property type="term" value="F:zinc ion binding"/>
    <property type="evidence" value="ECO:0007669"/>
    <property type="project" value="InterPro"/>
</dbReference>
<dbReference type="GO" id="GO:0090110">
    <property type="term" value="P:COPII-coated vesicle cargo loading"/>
    <property type="evidence" value="ECO:0007669"/>
    <property type="project" value="EnsemblFungi"/>
</dbReference>
<dbReference type="GO" id="GO:0006886">
    <property type="term" value="P:intracellular protein transport"/>
    <property type="evidence" value="ECO:0007669"/>
    <property type="project" value="EnsemblFungi"/>
</dbReference>
<dbReference type="GO" id="GO:1902953">
    <property type="term" value="P:positive regulation of ER to Golgi vesicle-mediated transport"/>
    <property type="evidence" value="ECO:0007669"/>
    <property type="project" value="EnsemblFungi"/>
</dbReference>
<dbReference type="GO" id="GO:0070863">
    <property type="term" value="P:positive regulation of protein exit from endoplasmic reticulum"/>
    <property type="evidence" value="ECO:0007669"/>
    <property type="project" value="EnsemblFungi"/>
</dbReference>
<dbReference type="GO" id="GO:0003400">
    <property type="term" value="P:regulation of COPII vesicle coating"/>
    <property type="evidence" value="ECO:0007669"/>
    <property type="project" value="EnsemblFungi"/>
</dbReference>
<dbReference type="GO" id="GO:0061709">
    <property type="term" value="P:reticulophagy"/>
    <property type="evidence" value="ECO:0007669"/>
    <property type="project" value="EnsemblFungi"/>
</dbReference>
<dbReference type="CDD" id="cd11287">
    <property type="entry name" value="Sec23_C"/>
    <property type="match status" value="1"/>
</dbReference>
<dbReference type="FunFam" id="1.20.120.730:FF:000005">
    <property type="entry name" value="Protein transport protein SEC23"/>
    <property type="match status" value="1"/>
</dbReference>
<dbReference type="FunFam" id="2.30.30.380:FF:000001">
    <property type="entry name" value="Protein transport protein SEC23"/>
    <property type="match status" value="1"/>
</dbReference>
<dbReference type="FunFam" id="3.40.20.10:FF:000006">
    <property type="entry name" value="Protein transport protein SEC23"/>
    <property type="match status" value="1"/>
</dbReference>
<dbReference type="FunFam" id="3.40.50.410:FF:000008">
    <property type="entry name" value="Protein transport protein SEC23"/>
    <property type="match status" value="1"/>
</dbReference>
<dbReference type="Gene3D" id="2.60.40.1670">
    <property type="entry name" value="beta-sandwich domain of Sec23/24"/>
    <property type="match status" value="1"/>
</dbReference>
<dbReference type="Gene3D" id="1.20.120.730">
    <property type="entry name" value="Sec23/Sec24 helical domain"/>
    <property type="match status" value="1"/>
</dbReference>
<dbReference type="Gene3D" id="3.40.20.10">
    <property type="entry name" value="Severin"/>
    <property type="match status" value="1"/>
</dbReference>
<dbReference type="Gene3D" id="3.40.50.410">
    <property type="entry name" value="von Willebrand factor, type A domain"/>
    <property type="match status" value="1"/>
</dbReference>
<dbReference type="Gene3D" id="2.30.30.380">
    <property type="entry name" value="Zn-finger domain of Sec23/24"/>
    <property type="match status" value="1"/>
</dbReference>
<dbReference type="InterPro" id="IPR029006">
    <property type="entry name" value="ADF-H/Gelsolin-like_dom_sf"/>
</dbReference>
<dbReference type="InterPro" id="IPR007123">
    <property type="entry name" value="Gelsolin-like_dom"/>
</dbReference>
<dbReference type="InterPro" id="IPR036180">
    <property type="entry name" value="Gelsolin-like_dom_sf"/>
</dbReference>
<dbReference type="InterPro" id="IPR037364">
    <property type="entry name" value="Sec23"/>
</dbReference>
<dbReference type="InterPro" id="IPR006900">
    <property type="entry name" value="Sec23/24_helical_dom"/>
</dbReference>
<dbReference type="InterPro" id="IPR036175">
    <property type="entry name" value="Sec23/24_helical_dom_sf"/>
</dbReference>
<dbReference type="InterPro" id="IPR006896">
    <property type="entry name" value="Sec23/24_trunk_dom"/>
</dbReference>
<dbReference type="InterPro" id="IPR012990">
    <property type="entry name" value="Sec23_24_beta_S"/>
</dbReference>
<dbReference type="InterPro" id="IPR037550">
    <property type="entry name" value="Sec23_C"/>
</dbReference>
<dbReference type="InterPro" id="IPR036465">
    <property type="entry name" value="vWFA_dom_sf"/>
</dbReference>
<dbReference type="InterPro" id="IPR006895">
    <property type="entry name" value="Znf_Sec23_Sec24"/>
</dbReference>
<dbReference type="InterPro" id="IPR036174">
    <property type="entry name" value="Znf_Sec23_Sec24_sf"/>
</dbReference>
<dbReference type="PANTHER" id="PTHR11141">
    <property type="entry name" value="PROTEIN TRANSPORT PROTEIN SEC23"/>
    <property type="match status" value="1"/>
</dbReference>
<dbReference type="PANTHER" id="PTHR11141:SF0">
    <property type="entry name" value="PROTEIN TRANSPORT PROTEIN SEC23"/>
    <property type="match status" value="1"/>
</dbReference>
<dbReference type="Pfam" id="PF00626">
    <property type="entry name" value="Gelsolin"/>
    <property type="match status" value="1"/>
</dbReference>
<dbReference type="Pfam" id="PF08033">
    <property type="entry name" value="Sec23_BS"/>
    <property type="match status" value="1"/>
</dbReference>
<dbReference type="Pfam" id="PF04815">
    <property type="entry name" value="Sec23_helical"/>
    <property type="match status" value="1"/>
</dbReference>
<dbReference type="Pfam" id="PF04811">
    <property type="entry name" value="Sec23_trunk"/>
    <property type="match status" value="1"/>
</dbReference>
<dbReference type="Pfam" id="PF04810">
    <property type="entry name" value="zf-Sec23_Sec24"/>
    <property type="match status" value="1"/>
</dbReference>
<dbReference type="SUPFAM" id="SSF81995">
    <property type="entry name" value="beta-sandwich domain of Sec23/24"/>
    <property type="match status" value="1"/>
</dbReference>
<dbReference type="SUPFAM" id="SSF82754">
    <property type="entry name" value="C-terminal, gelsolin-like domain of Sec23/24"/>
    <property type="match status" value="1"/>
</dbReference>
<dbReference type="SUPFAM" id="SSF81811">
    <property type="entry name" value="Helical domain of Sec23/24"/>
    <property type="match status" value="1"/>
</dbReference>
<dbReference type="SUPFAM" id="SSF53300">
    <property type="entry name" value="vWA-like"/>
    <property type="match status" value="1"/>
</dbReference>
<dbReference type="SUPFAM" id="SSF82919">
    <property type="entry name" value="Zn-finger domain of Sec23/24"/>
    <property type="match status" value="1"/>
</dbReference>
<gene>
    <name type="primary">SEC23</name>
    <name type="ORF">LELG_05662</name>
</gene>
<proteinExistence type="inferred from homology"/>
<feature type="chain" id="PRO_0000295464" description="Protein transport protein SEC23">
    <location>
        <begin position="1"/>
        <end position="768"/>
    </location>
</feature>
<feature type="binding site" evidence="1">
    <location>
        <position position="56"/>
    </location>
    <ligand>
        <name>Zn(2+)</name>
        <dbReference type="ChEBI" id="CHEBI:29105"/>
    </ligand>
</feature>
<feature type="binding site" evidence="1">
    <location>
        <position position="61"/>
    </location>
    <ligand>
        <name>Zn(2+)</name>
        <dbReference type="ChEBI" id="CHEBI:29105"/>
    </ligand>
</feature>
<feature type="binding site" evidence="1">
    <location>
        <position position="79"/>
    </location>
    <ligand>
        <name>Zn(2+)</name>
        <dbReference type="ChEBI" id="CHEBI:29105"/>
    </ligand>
</feature>
<feature type="binding site" evidence="1">
    <location>
        <position position="82"/>
    </location>
    <ligand>
        <name>Zn(2+)</name>
        <dbReference type="ChEBI" id="CHEBI:29105"/>
    </ligand>
</feature>